<dbReference type="EMBL" id="CP000448">
    <property type="protein sequence ID" value="ABI69597.1"/>
    <property type="molecule type" value="Genomic_DNA"/>
</dbReference>
<dbReference type="RefSeq" id="WP_011641681.1">
    <property type="nucleotide sequence ID" value="NC_008346.1"/>
</dbReference>
<dbReference type="SMR" id="Q0AUK7"/>
<dbReference type="STRING" id="335541.Swol_2306"/>
<dbReference type="KEGG" id="swo:Swol_2306"/>
<dbReference type="eggNOG" id="COG0100">
    <property type="taxonomic scope" value="Bacteria"/>
</dbReference>
<dbReference type="HOGENOM" id="CLU_072439_5_0_9"/>
<dbReference type="OrthoDB" id="9806415at2"/>
<dbReference type="Proteomes" id="UP000001968">
    <property type="component" value="Chromosome"/>
</dbReference>
<dbReference type="GO" id="GO:1990904">
    <property type="term" value="C:ribonucleoprotein complex"/>
    <property type="evidence" value="ECO:0007669"/>
    <property type="project" value="UniProtKB-KW"/>
</dbReference>
<dbReference type="GO" id="GO:0005840">
    <property type="term" value="C:ribosome"/>
    <property type="evidence" value="ECO:0007669"/>
    <property type="project" value="UniProtKB-KW"/>
</dbReference>
<dbReference type="GO" id="GO:0019843">
    <property type="term" value="F:rRNA binding"/>
    <property type="evidence" value="ECO:0007669"/>
    <property type="project" value="UniProtKB-UniRule"/>
</dbReference>
<dbReference type="GO" id="GO:0003735">
    <property type="term" value="F:structural constituent of ribosome"/>
    <property type="evidence" value="ECO:0007669"/>
    <property type="project" value="InterPro"/>
</dbReference>
<dbReference type="GO" id="GO:0006412">
    <property type="term" value="P:translation"/>
    <property type="evidence" value="ECO:0007669"/>
    <property type="project" value="UniProtKB-UniRule"/>
</dbReference>
<dbReference type="FunFam" id="3.30.420.80:FF:000001">
    <property type="entry name" value="30S ribosomal protein S11"/>
    <property type="match status" value="1"/>
</dbReference>
<dbReference type="Gene3D" id="3.30.420.80">
    <property type="entry name" value="Ribosomal protein S11"/>
    <property type="match status" value="1"/>
</dbReference>
<dbReference type="HAMAP" id="MF_01310">
    <property type="entry name" value="Ribosomal_uS11"/>
    <property type="match status" value="1"/>
</dbReference>
<dbReference type="InterPro" id="IPR001971">
    <property type="entry name" value="Ribosomal_uS11"/>
</dbReference>
<dbReference type="InterPro" id="IPR019981">
    <property type="entry name" value="Ribosomal_uS11_bac-type"/>
</dbReference>
<dbReference type="InterPro" id="IPR018102">
    <property type="entry name" value="Ribosomal_uS11_CS"/>
</dbReference>
<dbReference type="InterPro" id="IPR036967">
    <property type="entry name" value="Ribosomal_uS11_sf"/>
</dbReference>
<dbReference type="NCBIfam" id="NF003698">
    <property type="entry name" value="PRK05309.1"/>
    <property type="match status" value="1"/>
</dbReference>
<dbReference type="NCBIfam" id="TIGR03632">
    <property type="entry name" value="uS11_bact"/>
    <property type="match status" value="1"/>
</dbReference>
<dbReference type="PANTHER" id="PTHR11759">
    <property type="entry name" value="40S RIBOSOMAL PROTEIN S14/30S RIBOSOMAL PROTEIN S11"/>
    <property type="match status" value="1"/>
</dbReference>
<dbReference type="Pfam" id="PF00411">
    <property type="entry name" value="Ribosomal_S11"/>
    <property type="match status" value="1"/>
</dbReference>
<dbReference type="PIRSF" id="PIRSF002131">
    <property type="entry name" value="Ribosomal_S11"/>
    <property type="match status" value="1"/>
</dbReference>
<dbReference type="SUPFAM" id="SSF53137">
    <property type="entry name" value="Translational machinery components"/>
    <property type="match status" value="1"/>
</dbReference>
<dbReference type="PROSITE" id="PS00054">
    <property type="entry name" value="RIBOSOMAL_S11"/>
    <property type="match status" value="1"/>
</dbReference>
<evidence type="ECO:0000255" key="1">
    <source>
        <dbReference type="HAMAP-Rule" id="MF_01310"/>
    </source>
</evidence>
<evidence type="ECO:0000305" key="2"/>
<reference key="1">
    <citation type="journal article" date="2010" name="Environ. Microbiol.">
        <title>The genome of Syntrophomonas wolfei: new insights into syntrophic metabolism and biohydrogen production.</title>
        <authorList>
            <person name="Sieber J.R."/>
            <person name="Sims D.R."/>
            <person name="Han C."/>
            <person name="Kim E."/>
            <person name="Lykidis A."/>
            <person name="Lapidus A.L."/>
            <person name="McDonnald E."/>
            <person name="Rohlin L."/>
            <person name="Culley D.E."/>
            <person name="Gunsalus R."/>
            <person name="McInerney M.J."/>
        </authorList>
    </citation>
    <scope>NUCLEOTIDE SEQUENCE [LARGE SCALE GENOMIC DNA]</scope>
    <source>
        <strain>DSM 2245B / Goettingen</strain>
    </source>
</reference>
<name>RS11_SYNWW</name>
<organism>
    <name type="scientific">Syntrophomonas wolfei subsp. wolfei (strain DSM 2245B / Goettingen)</name>
    <dbReference type="NCBI Taxonomy" id="335541"/>
    <lineage>
        <taxon>Bacteria</taxon>
        <taxon>Bacillati</taxon>
        <taxon>Bacillota</taxon>
        <taxon>Clostridia</taxon>
        <taxon>Eubacteriales</taxon>
        <taxon>Syntrophomonadaceae</taxon>
        <taxon>Syntrophomonas</taxon>
    </lineage>
</organism>
<gene>
    <name evidence="1" type="primary">rpsK</name>
    <name type="ordered locus">Swol_2306</name>
</gene>
<protein>
    <recommendedName>
        <fullName evidence="1">Small ribosomal subunit protein uS11</fullName>
    </recommendedName>
    <alternativeName>
        <fullName evidence="2">30S ribosomal protein S11</fullName>
    </alternativeName>
</protein>
<keyword id="KW-1185">Reference proteome</keyword>
<keyword id="KW-0687">Ribonucleoprotein</keyword>
<keyword id="KW-0689">Ribosomal protein</keyword>
<keyword id="KW-0694">RNA-binding</keyword>
<keyword id="KW-0699">rRNA-binding</keyword>
<comment type="function">
    <text evidence="1">Located on the platform of the 30S subunit, it bridges several disparate RNA helices of the 16S rRNA. Forms part of the Shine-Dalgarno cleft in the 70S ribosome.</text>
</comment>
<comment type="subunit">
    <text evidence="1">Part of the 30S ribosomal subunit. Interacts with proteins S7 and S18. Binds to IF-3.</text>
</comment>
<comment type="similarity">
    <text evidence="1">Belongs to the universal ribosomal protein uS11 family.</text>
</comment>
<feature type="chain" id="PRO_0000294880" description="Small ribosomal subunit protein uS11">
    <location>
        <begin position="1"/>
        <end position="130"/>
    </location>
</feature>
<sequence length="130" mass="14126">MARRTTTRVKRREKKNIEHGIAHIKSTFNNTIISITDRHGNAISWSSAGTIGFKGSRKSTPFAAQQAAENAAKAAMEHGLKEVECYVKGPGAGREAAIRSLQAAGLEVSVIKDVTPIPHNGCRPPKRRRV</sequence>
<proteinExistence type="inferred from homology"/>
<accession>Q0AUK7</accession>